<organism>
    <name type="scientific">Nymphaea alba</name>
    <name type="common">White water-lily</name>
    <name type="synonym">Castalia alba</name>
    <dbReference type="NCBI Taxonomy" id="34301"/>
    <lineage>
        <taxon>Eukaryota</taxon>
        <taxon>Viridiplantae</taxon>
        <taxon>Streptophyta</taxon>
        <taxon>Embryophyta</taxon>
        <taxon>Tracheophyta</taxon>
        <taxon>Spermatophyta</taxon>
        <taxon>Magnoliopsida</taxon>
        <taxon>Nymphaeales</taxon>
        <taxon>Nymphaeaceae</taxon>
        <taxon>Nymphaea</taxon>
    </lineage>
</organism>
<protein>
    <recommendedName>
        <fullName>NAD(P)H-quinone oxidoreductase subunit 5, chloroplastic</fullName>
        <ecNumber>7.1.1.-</ecNumber>
    </recommendedName>
    <alternativeName>
        <fullName>NAD(P)H dehydrogenase subunit 5</fullName>
    </alternativeName>
    <alternativeName>
        <fullName>NADH-plastoquinone oxidoreductase subunit 5</fullName>
    </alternativeName>
</protein>
<reference key="1">
    <citation type="journal article" date="2004" name="Mol. Biol. Evol.">
        <title>The chloroplast genome of Nymphaea alba: whole-genome analyses and the problem of identifying the most basal angiosperm.</title>
        <authorList>
            <person name="Goremykin V.V."/>
            <person name="Hirsch-Ernst K.I."/>
            <person name="Woelfl S."/>
            <person name="Hellwig F.H."/>
        </authorList>
    </citation>
    <scope>NUCLEOTIDE SEQUENCE [LARGE SCALE GENOMIC DNA]</scope>
</reference>
<dbReference type="EC" id="7.1.1.-"/>
<dbReference type="EMBL" id="AJ627251">
    <property type="protein sequence ID" value="CAF28643.1"/>
    <property type="molecule type" value="Genomic_DNA"/>
</dbReference>
<dbReference type="RefSeq" id="YP_053203.1">
    <property type="nucleotide sequence ID" value="NC_006050.1"/>
</dbReference>
<dbReference type="SMR" id="Q6EW03"/>
<dbReference type="GeneID" id="2896132"/>
<dbReference type="GO" id="GO:0009535">
    <property type="term" value="C:chloroplast thylakoid membrane"/>
    <property type="evidence" value="ECO:0007669"/>
    <property type="project" value="UniProtKB-SubCell"/>
</dbReference>
<dbReference type="GO" id="GO:0008137">
    <property type="term" value="F:NADH dehydrogenase (ubiquinone) activity"/>
    <property type="evidence" value="ECO:0007669"/>
    <property type="project" value="InterPro"/>
</dbReference>
<dbReference type="GO" id="GO:0048038">
    <property type="term" value="F:quinone binding"/>
    <property type="evidence" value="ECO:0007669"/>
    <property type="project" value="UniProtKB-KW"/>
</dbReference>
<dbReference type="GO" id="GO:0042773">
    <property type="term" value="P:ATP synthesis coupled electron transport"/>
    <property type="evidence" value="ECO:0007669"/>
    <property type="project" value="InterPro"/>
</dbReference>
<dbReference type="GO" id="GO:0015990">
    <property type="term" value="P:electron transport coupled proton transport"/>
    <property type="evidence" value="ECO:0007669"/>
    <property type="project" value="TreeGrafter"/>
</dbReference>
<dbReference type="Gene3D" id="1.20.5.2700">
    <property type="match status" value="1"/>
</dbReference>
<dbReference type="InterPro" id="IPR002128">
    <property type="entry name" value="NADH_UbQ_OxRdtase_chlpt_su5_C"/>
</dbReference>
<dbReference type="InterPro" id="IPR018393">
    <property type="entry name" value="NADHpl_OxRdtase_5_subgr"/>
</dbReference>
<dbReference type="InterPro" id="IPR001750">
    <property type="entry name" value="ND/Mrp_TM"/>
</dbReference>
<dbReference type="InterPro" id="IPR003945">
    <property type="entry name" value="NU5C-like"/>
</dbReference>
<dbReference type="InterPro" id="IPR001516">
    <property type="entry name" value="Proton_antipo_N"/>
</dbReference>
<dbReference type="NCBIfam" id="TIGR01974">
    <property type="entry name" value="NDH_I_L"/>
    <property type="match status" value="1"/>
</dbReference>
<dbReference type="NCBIfam" id="NF005141">
    <property type="entry name" value="PRK06590.1"/>
    <property type="match status" value="1"/>
</dbReference>
<dbReference type="PANTHER" id="PTHR42829">
    <property type="entry name" value="NADH-UBIQUINONE OXIDOREDUCTASE CHAIN 5"/>
    <property type="match status" value="1"/>
</dbReference>
<dbReference type="PANTHER" id="PTHR42829:SF2">
    <property type="entry name" value="NADH-UBIQUINONE OXIDOREDUCTASE CHAIN 5"/>
    <property type="match status" value="1"/>
</dbReference>
<dbReference type="Pfam" id="PF01010">
    <property type="entry name" value="Proton_antipo_C"/>
    <property type="match status" value="1"/>
</dbReference>
<dbReference type="Pfam" id="PF00361">
    <property type="entry name" value="Proton_antipo_M"/>
    <property type="match status" value="1"/>
</dbReference>
<dbReference type="Pfam" id="PF00662">
    <property type="entry name" value="Proton_antipo_N"/>
    <property type="match status" value="1"/>
</dbReference>
<dbReference type="PRINTS" id="PR01434">
    <property type="entry name" value="NADHDHGNASE5"/>
</dbReference>
<dbReference type="PRINTS" id="PR01435">
    <property type="entry name" value="NPOXDRDTASE5"/>
</dbReference>
<gene>
    <name type="primary">ndhF</name>
</gene>
<geneLocation type="chloroplast"/>
<keyword id="KW-0150">Chloroplast</keyword>
<keyword id="KW-0472">Membrane</keyword>
<keyword id="KW-0520">NAD</keyword>
<keyword id="KW-0521">NADP</keyword>
<keyword id="KW-0934">Plastid</keyword>
<keyword id="KW-0618">Plastoquinone</keyword>
<keyword id="KW-0874">Quinone</keyword>
<keyword id="KW-0793">Thylakoid</keyword>
<keyword id="KW-1278">Translocase</keyword>
<keyword id="KW-0812">Transmembrane</keyword>
<keyword id="KW-1133">Transmembrane helix</keyword>
<keyword id="KW-0813">Transport</keyword>
<sequence length="747" mass="84455">MERTYQYAWIIPFVPLLVTMLIGLELLLNPTATKNIRRIWAFPAVLLLSIVMVFSTKLAIQQINGSSIYEYLWSWSITSDFSLEFGYLIDPLTSIMSILITTVGIMVLIYSDNYMSHDRGYLRFFAYMSFFNTAMLGLVTSPNLIQIHIFWELVGMCSYLLIGFWFTRPIAANACQKAFVTNRVGDFGLLLGILGFYLITGSFEFQDLFEIFNDSIINNNEINSSFATLCAFLLFLGAVAKSAQFPLHVWLPDAMEGPTPISALIHAATMVAAGIFLVARLLPLFIAIPYIMNIISLIGVITVLLGATLALAQRDIKRSLAYSTMSQLGYMMLALGIGSYRAALFHLITHAYSKALLFLGSGSIIHSMEPIVGYSPAKSQNMVLMGGLTKYMPITKTTFFLGTLSLCGIPPLACFWSKDEILNDSWLYSPIFAIIAFYTAGLTAFYMFRMYLLTFEGHLRSHFQNYSGHTNSSFYSISIWGQEGSKPVSSNLLLTTRNNNDKSSFSNCSFSNTYKIAGYVRTMRSSFSTHFLNKDSHTLLYPHESDNTMLFPLLILAIFTLFVGCIGIHFGHEVMEVDILSKWLTPSMKLFHQNSTDEDWYKFLTNAFYSVSIAYFGIFLASVLYGSVYSDRQNLYLINSFAKIDSKMRIRLEQIINVIYNWSYNRGYIDVYYEKVFIKGVRELAQLAHSFDRRVIDGVTNGIGVASFFLGEGIKYIGGGRISSYLFLYLACVSIVLLIYYYYNFLN</sequence>
<evidence type="ECO:0000250" key="1"/>
<evidence type="ECO:0000255" key="2"/>
<evidence type="ECO:0000305" key="3"/>
<comment type="function">
    <text evidence="1">NDH shuttles electrons from NAD(P)H:plastoquinone, via FMN and iron-sulfur (Fe-S) centers, to quinones in the photosynthetic chain and possibly in a chloroplast respiratory chain. The immediate electron acceptor for the enzyme in this species is believed to be plastoquinone. Couples the redox reaction to proton translocation, and thus conserves the redox energy in a proton gradient (By similarity).</text>
</comment>
<comment type="catalytic activity">
    <reaction>
        <text>a plastoquinone + NADH + (n+1) H(+)(in) = a plastoquinol + NAD(+) + n H(+)(out)</text>
        <dbReference type="Rhea" id="RHEA:42608"/>
        <dbReference type="Rhea" id="RHEA-COMP:9561"/>
        <dbReference type="Rhea" id="RHEA-COMP:9562"/>
        <dbReference type="ChEBI" id="CHEBI:15378"/>
        <dbReference type="ChEBI" id="CHEBI:17757"/>
        <dbReference type="ChEBI" id="CHEBI:57540"/>
        <dbReference type="ChEBI" id="CHEBI:57945"/>
        <dbReference type="ChEBI" id="CHEBI:62192"/>
    </reaction>
</comment>
<comment type="catalytic activity">
    <reaction>
        <text>a plastoquinone + NADPH + (n+1) H(+)(in) = a plastoquinol + NADP(+) + n H(+)(out)</text>
        <dbReference type="Rhea" id="RHEA:42612"/>
        <dbReference type="Rhea" id="RHEA-COMP:9561"/>
        <dbReference type="Rhea" id="RHEA-COMP:9562"/>
        <dbReference type="ChEBI" id="CHEBI:15378"/>
        <dbReference type="ChEBI" id="CHEBI:17757"/>
        <dbReference type="ChEBI" id="CHEBI:57783"/>
        <dbReference type="ChEBI" id="CHEBI:58349"/>
        <dbReference type="ChEBI" id="CHEBI:62192"/>
    </reaction>
</comment>
<comment type="subunit">
    <text evidence="1">NDH is composed of at least 16 different subunits, 5 of which are encoded in the nucleus.</text>
</comment>
<comment type="subcellular location">
    <subcellularLocation>
        <location evidence="1">Plastid</location>
        <location evidence="1">Chloroplast thylakoid membrane</location>
        <topology evidence="1">Multi-pass membrane protein</topology>
    </subcellularLocation>
</comment>
<comment type="similarity">
    <text evidence="3">Belongs to the complex I subunit 5 family.</text>
</comment>
<proteinExistence type="inferred from homology"/>
<feature type="chain" id="PRO_0000360956" description="NAD(P)H-quinone oxidoreductase subunit 5, chloroplastic">
    <location>
        <begin position="1"/>
        <end position="747"/>
    </location>
</feature>
<feature type="transmembrane region" description="Helical" evidence="2">
    <location>
        <begin position="8"/>
        <end position="28"/>
    </location>
</feature>
<feature type="transmembrane region" description="Helical" evidence="2">
    <location>
        <begin position="39"/>
        <end position="59"/>
    </location>
</feature>
<feature type="transmembrane region" description="Helical" evidence="2">
    <location>
        <begin position="89"/>
        <end position="109"/>
    </location>
</feature>
<feature type="transmembrane region" description="Helical" evidence="2">
    <location>
        <begin position="125"/>
        <end position="145"/>
    </location>
</feature>
<feature type="transmembrane region" description="Helical" evidence="2">
    <location>
        <begin position="147"/>
        <end position="167"/>
    </location>
</feature>
<feature type="transmembrane region" description="Helical" evidence="2">
    <location>
        <begin position="185"/>
        <end position="205"/>
    </location>
</feature>
<feature type="transmembrane region" description="Helical" evidence="2">
    <location>
        <begin position="231"/>
        <end position="251"/>
    </location>
</feature>
<feature type="transmembrane region" description="Helical" evidence="2">
    <location>
        <begin position="259"/>
        <end position="279"/>
    </location>
</feature>
<feature type="transmembrane region" description="Helical" evidence="2">
    <location>
        <begin position="281"/>
        <end position="301"/>
    </location>
</feature>
<feature type="transmembrane region" description="Helical" evidence="2">
    <location>
        <begin position="328"/>
        <end position="348"/>
    </location>
</feature>
<feature type="transmembrane region" description="Helical" evidence="2">
    <location>
        <begin position="355"/>
        <end position="375"/>
    </location>
</feature>
<feature type="transmembrane region" description="Helical" evidence="2">
    <location>
        <begin position="397"/>
        <end position="417"/>
    </location>
</feature>
<feature type="transmembrane region" description="Helical" evidence="2">
    <location>
        <begin position="426"/>
        <end position="446"/>
    </location>
</feature>
<feature type="transmembrane region" description="Helical" evidence="2">
    <location>
        <begin position="550"/>
        <end position="570"/>
    </location>
</feature>
<feature type="transmembrane region" description="Helical" evidence="2">
    <location>
        <begin position="608"/>
        <end position="628"/>
    </location>
</feature>
<feature type="transmembrane region" description="Helical" evidence="2">
    <location>
        <begin position="726"/>
        <end position="746"/>
    </location>
</feature>
<accession>Q6EW03</accession>
<name>NU5C_NYMAL</name>